<evidence type="ECO:0000250" key="1"/>
<evidence type="ECO:0000305" key="2"/>
<comment type="function">
    <text evidence="1">Binds to the genomic viral ssDNA, shuttles it into and out of the cell nucleus. Begomoviruses use 2 proteins to transport their DNA from cell to cell. The nuclear shuttle protein (NSP) shuttles it between nucleus and cytoplasm and the movement protein (MP) probably transports the DNA-NSP complex to the cell periphery and facilitates movement across the cell wall (By similarity).</text>
</comment>
<comment type="subunit">
    <text evidence="1">Binds to single-stranded and double-stranded viral DNA. Interacts with the host nuclear shuttle interacting (NSI) protein. This interaction may allow NSP to recruit NSI monomers to the viral genome and thus regulate nuclear export of viral genome by NSP (By similarity).</text>
</comment>
<comment type="subcellular location">
    <subcellularLocation>
        <location evidence="1">Host nucleus</location>
    </subcellularLocation>
    <subcellularLocation>
        <location evidence="1">Host cytoplasm</location>
    </subcellularLocation>
    <subcellularLocation>
        <location evidence="1">Host cell membrane</location>
        <topology evidence="1">Peripheral membrane protein</topology>
        <orientation evidence="1">Cytoplasmic side</orientation>
    </subcellularLocation>
    <text evidence="1">Translocated to the plasma membrane by the movement protein BC1.</text>
</comment>
<comment type="similarity">
    <text evidence="2">Belongs to the begomovirus nuclear shuttle protein family.</text>
</comment>
<reference key="1">
    <citation type="journal article" date="1984" name="EMBO J.">
        <title>Complete nucleotide sequence of the infectious cloned DNA components of tomato golden mosaic virus: potential coding regions and regulatory sequences.</title>
        <authorList>
            <person name="Hamilton W.D.O."/>
            <person name="Stein V.E."/>
            <person name="Coutts R.H.A."/>
            <person name="Buck K.W."/>
        </authorList>
    </citation>
    <scope>NUCLEOTIDE SEQUENCE [GENOMIC DNA]</scope>
</reference>
<protein>
    <recommendedName>
        <fullName>Nuclear shuttle protein</fullName>
        <shortName>NSP</shortName>
    </recommendedName>
    <alternativeName>
        <fullName>Protein BR1</fullName>
    </alternativeName>
    <alternativeName>
        <fullName>Protein BV1</fullName>
    </alternativeName>
</protein>
<name>NSP_TGMVY</name>
<feature type="chain" id="PRO_0000222268" description="Nuclear shuttle protein">
    <location>
        <begin position="1"/>
        <end position="256"/>
    </location>
</feature>
<feature type="region of interest" description="Interaction with Arabidopsis thaliana NSI protein" evidence="1">
    <location>
        <begin position="150"/>
        <end position="187"/>
    </location>
</feature>
<feature type="short sequence motif" description="Bipartite nuclear localization signal" evidence="1">
    <location>
        <begin position="21"/>
        <end position="42"/>
    </location>
</feature>
<feature type="short sequence motif" description="Nuclear localization signal" evidence="1">
    <location>
        <begin position="81"/>
        <end position="96"/>
    </location>
</feature>
<proteinExistence type="inferred from homology"/>
<organismHost>
    <name type="scientific">Solanum lycopersicum</name>
    <name type="common">Tomato</name>
    <name type="synonym">Lycopersicon esculentum</name>
    <dbReference type="NCBI Taxonomy" id="4081"/>
</organismHost>
<organism>
    <name type="scientific">Tomato golden mosaic virus (strain Yellow vein)</name>
    <name type="common">TGMV</name>
    <dbReference type="NCBI Taxonomy" id="223341"/>
    <lineage>
        <taxon>Viruses</taxon>
        <taxon>Monodnaviria</taxon>
        <taxon>Shotokuvirae</taxon>
        <taxon>Cressdnaviricota</taxon>
        <taxon>Repensiviricetes</taxon>
        <taxon>Geplafuvirales</taxon>
        <taxon>Geminiviridae</taxon>
        <taxon>Begomovirus</taxon>
        <taxon>Tomato golden mosaic virus</taxon>
    </lineage>
</organism>
<accession>P03564</accession>
<keyword id="KW-0238">DNA-binding</keyword>
<keyword id="KW-1032">Host cell membrane</keyword>
<keyword id="KW-1035">Host cytoplasm</keyword>
<keyword id="KW-1043">Host membrane</keyword>
<keyword id="KW-1048">Host nucleus</keyword>
<keyword id="KW-0945">Host-virus interaction</keyword>
<keyword id="KW-0472">Membrane</keyword>
<keyword id="KW-1185">Reference proteome</keyword>
<keyword id="KW-0813">Transport</keyword>
<keyword id="KW-0916">Viral movement protein</keyword>
<sequence length="256" mass="29375">MYSTKYRRGFLANQGRGYPRHSTGKRSRNVSRIDFKRRSSKYVHGNDDSKMANQRIHENQFGPEFVMVHNTAISTFITFPSLGKTEPSRSRSYIKLKRLRFKGTVKIERVHVDLSMDGPSPKIEGVFSLVVVVDRQPHLSPTGCLHTFDELFGARIHSHGNLAVSSALKDRFYIRHVFKRVISVEKDSTMIDLEGMTSFTNRRFNCWSAFKDFDRQACNGVYGNISKNAILVYYCWMSDIVSKASTFVSFDLDYVG</sequence>
<gene>
    <name type="ORF">BR1</name>
    <name type="ORF">BV1</name>
</gene>
<dbReference type="EMBL" id="K02030">
    <property type="status" value="NOT_ANNOTATED_CDS"/>
    <property type="molecule type" value="Genomic_DNA"/>
</dbReference>
<dbReference type="PIR" id="A04167">
    <property type="entry name" value="QQCVRG"/>
</dbReference>
<dbReference type="Proteomes" id="UP000007405">
    <property type="component" value="Genome"/>
</dbReference>
<dbReference type="GO" id="GO:0043657">
    <property type="term" value="C:host cell"/>
    <property type="evidence" value="ECO:0007669"/>
    <property type="project" value="InterPro"/>
</dbReference>
<dbReference type="GO" id="GO:0044164">
    <property type="term" value="C:host cell cytosol"/>
    <property type="evidence" value="ECO:0000314"/>
    <property type="project" value="CAFA"/>
</dbReference>
<dbReference type="GO" id="GO:0042025">
    <property type="term" value="C:host cell nucleus"/>
    <property type="evidence" value="ECO:0000314"/>
    <property type="project" value="CAFA"/>
</dbReference>
<dbReference type="GO" id="GO:0020002">
    <property type="term" value="C:host cell plasma membrane"/>
    <property type="evidence" value="ECO:0007669"/>
    <property type="project" value="UniProtKB-SubCell"/>
</dbReference>
<dbReference type="GO" id="GO:0016020">
    <property type="term" value="C:membrane"/>
    <property type="evidence" value="ECO:0007669"/>
    <property type="project" value="UniProtKB-KW"/>
</dbReference>
<dbReference type="GO" id="GO:0019028">
    <property type="term" value="C:viral capsid"/>
    <property type="evidence" value="ECO:0007669"/>
    <property type="project" value="InterPro"/>
</dbReference>
<dbReference type="GO" id="GO:0003697">
    <property type="term" value="F:single-stranded DNA binding"/>
    <property type="evidence" value="ECO:0007669"/>
    <property type="project" value="InterPro"/>
</dbReference>
<dbReference type="GO" id="GO:0005198">
    <property type="term" value="F:structural molecule activity"/>
    <property type="evidence" value="ECO:0007669"/>
    <property type="project" value="InterPro"/>
</dbReference>
<dbReference type="GO" id="GO:0051027">
    <property type="term" value="P:DNA transport"/>
    <property type="evidence" value="ECO:0007669"/>
    <property type="project" value="InterPro"/>
</dbReference>
<dbReference type="GO" id="GO:0046740">
    <property type="term" value="P:transport of virus in host, cell to cell"/>
    <property type="evidence" value="ECO:0007669"/>
    <property type="project" value="UniProtKB-KW"/>
</dbReference>
<dbReference type="InterPro" id="IPR001530">
    <property type="entry name" value="Gemini_BR1"/>
</dbReference>
<dbReference type="InterPro" id="IPR000263">
    <property type="entry name" value="GV_A/BR1_coat"/>
</dbReference>
<dbReference type="Pfam" id="PF00844">
    <property type="entry name" value="Gemini_coat"/>
    <property type="match status" value="1"/>
</dbReference>
<dbReference type="PRINTS" id="PR00223">
    <property type="entry name" value="GEMCOATARBR1"/>
</dbReference>
<dbReference type="PRINTS" id="PR00225">
    <property type="entry name" value="GEMCOATBR1"/>
</dbReference>